<organism>
    <name type="scientific">Escherichia coli (strain SMS-3-5 / SECEC)</name>
    <dbReference type="NCBI Taxonomy" id="439855"/>
    <lineage>
        <taxon>Bacteria</taxon>
        <taxon>Pseudomonadati</taxon>
        <taxon>Pseudomonadota</taxon>
        <taxon>Gammaproteobacteria</taxon>
        <taxon>Enterobacterales</taxon>
        <taxon>Enterobacteriaceae</taxon>
        <taxon>Escherichia</taxon>
    </lineage>
</organism>
<gene>
    <name evidence="1" type="primary">hslO</name>
    <name type="ordered locus">EcSMS35_3679</name>
</gene>
<proteinExistence type="inferred from homology"/>
<accession>B1LHJ8</accession>
<protein>
    <recommendedName>
        <fullName evidence="1">33 kDa chaperonin</fullName>
    </recommendedName>
    <alternativeName>
        <fullName evidence="1">Heat shock protein 33 homolog</fullName>
        <shortName evidence="1">HSP33</shortName>
    </alternativeName>
</protein>
<sequence>MPQHDQLHRYLFENFAVRGELVTVSETLQQILENHDYPQPVKNVLAELLVATSLLTATLKFDGDITVQLQGDGPMNLAVINGNNNQQMRGVARVQGEIPENADLKTLVGNGYVVITITPSEGERYQGVVGLEGDTLAACLEDYFMRSEQLPTRLFIRTGDVDGKPAAGGMLLQVMPAQNAQQDDFDHLATLTETIKTEELLTLPANEVLWRLYHEEEVTVYDPQDVEFKCTCSRERCADALKTLPDEEVDSILAEDGEIDMHCDYCGNHYLFNAMDIAEIRNNASPADPQVH</sequence>
<keyword id="KW-0143">Chaperone</keyword>
<keyword id="KW-0963">Cytoplasm</keyword>
<keyword id="KW-1015">Disulfide bond</keyword>
<keyword id="KW-0676">Redox-active center</keyword>
<keyword id="KW-0862">Zinc</keyword>
<name>HSLO_ECOSM</name>
<evidence type="ECO:0000255" key="1">
    <source>
        <dbReference type="HAMAP-Rule" id="MF_00117"/>
    </source>
</evidence>
<dbReference type="EMBL" id="CP000970">
    <property type="protein sequence ID" value="ACB18642.1"/>
    <property type="molecule type" value="Genomic_DNA"/>
</dbReference>
<dbReference type="RefSeq" id="WP_001135574.1">
    <property type="nucleotide sequence ID" value="NC_010498.1"/>
</dbReference>
<dbReference type="SMR" id="B1LHJ8"/>
<dbReference type="GeneID" id="93778597"/>
<dbReference type="KEGG" id="ecm:EcSMS35_3679"/>
<dbReference type="HOGENOM" id="CLU_054493_0_0_6"/>
<dbReference type="Proteomes" id="UP000007011">
    <property type="component" value="Chromosome"/>
</dbReference>
<dbReference type="GO" id="GO:0005737">
    <property type="term" value="C:cytoplasm"/>
    <property type="evidence" value="ECO:0007669"/>
    <property type="project" value="UniProtKB-SubCell"/>
</dbReference>
<dbReference type="GO" id="GO:0044183">
    <property type="term" value="F:protein folding chaperone"/>
    <property type="evidence" value="ECO:0007669"/>
    <property type="project" value="TreeGrafter"/>
</dbReference>
<dbReference type="GO" id="GO:0051082">
    <property type="term" value="F:unfolded protein binding"/>
    <property type="evidence" value="ECO:0007669"/>
    <property type="project" value="UniProtKB-UniRule"/>
</dbReference>
<dbReference type="GO" id="GO:0042026">
    <property type="term" value="P:protein refolding"/>
    <property type="evidence" value="ECO:0007669"/>
    <property type="project" value="TreeGrafter"/>
</dbReference>
<dbReference type="CDD" id="cd00498">
    <property type="entry name" value="Hsp33"/>
    <property type="match status" value="1"/>
</dbReference>
<dbReference type="FunFam" id="3.55.30.10:FF:000001">
    <property type="entry name" value="33 kDa chaperonin"/>
    <property type="match status" value="1"/>
</dbReference>
<dbReference type="Gene3D" id="1.10.287.480">
    <property type="entry name" value="helix hairpin bin"/>
    <property type="match status" value="1"/>
</dbReference>
<dbReference type="Gene3D" id="3.55.30.10">
    <property type="entry name" value="Hsp33 domain"/>
    <property type="match status" value="1"/>
</dbReference>
<dbReference type="Gene3D" id="3.90.1280.10">
    <property type="entry name" value="HSP33 redox switch-like"/>
    <property type="match status" value="1"/>
</dbReference>
<dbReference type="HAMAP" id="MF_00117">
    <property type="entry name" value="HslO"/>
    <property type="match status" value="1"/>
</dbReference>
<dbReference type="InterPro" id="IPR000397">
    <property type="entry name" value="Heat_shock_Hsp33"/>
</dbReference>
<dbReference type="InterPro" id="IPR016154">
    <property type="entry name" value="Heat_shock_Hsp33_C"/>
</dbReference>
<dbReference type="InterPro" id="IPR016153">
    <property type="entry name" value="Heat_shock_Hsp33_N"/>
</dbReference>
<dbReference type="InterPro" id="IPR023212">
    <property type="entry name" value="Hsp33_helix_hairpin_bin_dom_sf"/>
</dbReference>
<dbReference type="NCBIfam" id="NF001033">
    <property type="entry name" value="PRK00114.1"/>
    <property type="match status" value="1"/>
</dbReference>
<dbReference type="PANTHER" id="PTHR30111">
    <property type="entry name" value="33 KDA CHAPERONIN"/>
    <property type="match status" value="1"/>
</dbReference>
<dbReference type="PANTHER" id="PTHR30111:SF1">
    <property type="entry name" value="33 KDA CHAPERONIN"/>
    <property type="match status" value="1"/>
</dbReference>
<dbReference type="Pfam" id="PF01430">
    <property type="entry name" value="HSP33"/>
    <property type="match status" value="1"/>
</dbReference>
<dbReference type="PIRSF" id="PIRSF005261">
    <property type="entry name" value="Heat_shock_Hsp33"/>
    <property type="match status" value="1"/>
</dbReference>
<dbReference type="SUPFAM" id="SSF64397">
    <property type="entry name" value="Hsp33 domain"/>
    <property type="match status" value="1"/>
</dbReference>
<dbReference type="SUPFAM" id="SSF118352">
    <property type="entry name" value="HSP33 redox switch-like"/>
    <property type="match status" value="1"/>
</dbReference>
<comment type="function">
    <text evidence="1">Redox regulated molecular chaperone. Protects both thermally unfolding and oxidatively damaged proteins from irreversible aggregation. Plays an important role in the bacterial defense system toward oxidative stress.</text>
</comment>
<comment type="subcellular location">
    <subcellularLocation>
        <location evidence="1">Cytoplasm</location>
    </subcellularLocation>
</comment>
<comment type="PTM">
    <text evidence="1">Under oxidizing conditions two disulfide bonds are formed involving the reactive cysteines. Under reducing conditions zinc is bound to the reactive cysteines and the protein is inactive.</text>
</comment>
<comment type="similarity">
    <text evidence="1">Belongs to the HSP33 family.</text>
</comment>
<feature type="chain" id="PRO_1000190458" description="33 kDa chaperonin">
    <location>
        <begin position="1"/>
        <end position="292"/>
    </location>
</feature>
<feature type="disulfide bond" description="Redox-active" evidence="1">
    <location>
        <begin position="230"/>
        <end position="232"/>
    </location>
</feature>
<feature type="disulfide bond" description="Redox-active" evidence="1">
    <location>
        <begin position="263"/>
        <end position="266"/>
    </location>
</feature>
<reference key="1">
    <citation type="journal article" date="2008" name="J. Bacteriol.">
        <title>Insights into the environmental resistance gene pool from the genome sequence of the multidrug-resistant environmental isolate Escherichia coli SMS-3-5.</title>
        <authorList>
            <person name="Fricke W.F."/>
            <person name="Wright M.S."/>
            <person name="Lindell A.H."/>
            <person name="Harkins D.M."/>
            <person name="Baker-Austin C."/>
            <person name="Ravel J."/>
            <person name="Stepanauskas R."/>
        </authorList>
    </citation>
    <scope>NUCLEOTIDE SEQUENCE [LARGE SCALE GENOMIC DNA]</scope>
    <source>
        <strain>SMS-3-5 / SECEC</strain>
    </source>
</reference>